<proteinExistence type="evidence at protein level"/>
<comment type="function">
    <text evidence="2">3-aminobutyryl-CoA aminotransferase that acts specifically on coenzyme A (CoA) esters and catalyzes the conversion of 3-aminobutyryl-CoA into acetoacetyl-CoA in an alternative pathway of lysine fermentation.</text>
</comment>
<comment type="catalytic activity">
    <reaction evidence="2">
        <text>(3S)-3-aminobutanoyl-CoA + 2-oxoglutarate = acetoacetyl-CoA + L-glutamate</text>
        <dbReference type="Rhea" id="RHEA:50936"/>
        <dbReference type="ChEBI" id="CHEBI:16810"/>
        <dbReference type="ChEBI" id="CHEBI:29985"/>
        <dbReference type="ChEBI" id="CHEBI:57286"/>
        <dbReference type="ChEBI" id="CHEBI:57366"/>
        <dbReference type="EC" id="2.6.1.111"/>
    </reaction>
</comment>
<comment type="cofactor">
    <cofactor evidence="2">
        <name>pyridoxal 5'-phosphate</name>
        <dbReference type="ChEBI" id="CHEBI:597326"/>
    </cofactor>
</comment>
<comment type="biophysicochemical properties">
    <kinetics>
        <KM evidence="2">4.3 uM for 3-aminobutyryl-CoA</KM>
        <KM evidence="2">2.9 uM for alpha-ketoglutarate</KM>
        <KM evidence="2">20.1 uM for pyruvate</KM>
        <text>kcat is 1.80 sec(-1) for 3-aminobutyryl-CoA. kcat is 1.80 sec(-1) for alpha-ketoglutarate. kcat is 0.4 sec(-1) for pyruvate.</text>
    </kinetics>
    <phDependence>
        <text evidence="2">Optimum pH is 8.0.</text>
    </phDependence>
</comment>
<comment type="pathway">
    <text>Amino-acid degradation; L-lysine degradation via acetate pathway.</text>
</comment>
<comment type="subunit">
    <text evidence="2">Homodimer.</text>
</comment>
<comment type="similarity">
    <text evidence="3">Belongs to the class-III pyridoxal-phosphate-dependent aminotransferase family.</text>
</comment>
<organism>
    <name type="scientific">Cloacimonas acidaminovorans (strain Evry)</name>
    <dbReference type="NCBI Taxonomy" id="459349"/>
    <lineage>
        <taxon>Bacteria</taxon>
        <taxon>Pseudomonadati</taxon>
        <taxon>Candidatus Cloacimonadota</taxon>
        <taxon>Candidatus Cloacimonadia</taxon>
        <taxon>Candidatus Cloacimonadales</taxon>
        <taxon>Candidatus Cloacimonadaceae</taxon>
        <taxon>Candidatus Cloacimonas</taxon>
    </lineage>
</organism>
<name>KAT_CLOAI</name>
<protein>
    <recommendedName>
        <fullName>3-aminobutyryl-CoA aminotransferase</fullName>
        <ecNumber evidence="2">2.6.1.111</ecNumber>
    </recommendedName>
    <alternativeName>
        <fullName>HemL-like protein</fullName>
    </alternativeName>
</protein>
<reference key="1">
    <citation type="journal article" date="2008" name="J. Bacteriol.">
        <title>'Candidatus Cloacamonas acidaminovorans': genome sequence reconstruction provides a first glimpse of a new bacterial division.</title>
        <authorList>
            <person name="Pelletier E."/>
            <person name="Kreimeyer A."/>
            <person name="Bocs S."/>
            <person name="Rouy Z."/>
            <person name="Gyapay G."/>
            <person name="Chouari R."/>
            <person name="Riviere D."/>
            <person name="Ganesan A."/>
            <person name="Daegelen P."/>
            <person name="Sghir A."/>
            <person name="Cohen G.N."/>
            <person name="Medigue C."/>
            <person name="Weissenbach J."/>
            <person name="Le Paslier D."/>
        </authorList>
    </citation>
    <scope>NUCLEOTIDE SEQUENCE [LARGE SCALE GENOMIC DNA]</scope>
    <source>
        <strain>Evry</strain>
    </source>
</reference>
<reference key="2">
    <citation type="journal article" date="2011" name="PLoS ONE">
        <title>A novel acyl-CoA beta-transaminase characterized from a metagenome.</title>
        <authorList>
            <person name="Perret A."/>
            <person name="Lechaplais C."/>
            <person name="Tricot S."/>
            <person name="Perchat N."/>
            <person name="Vergne C."/>
            <person name="Pelle C."/>
            <person name="Bastard K."/>
            <person name="Kreimeyer A."/>
            <person name="Vallenet D."/>
            <person name="Zaparucha A."/>
            <person name="Weissenbach J."/>
            <person name="Salanoubat M."/>
        </authorList>
    </citation>
    <scope>FUNCTION</scope>
    <scope>CATALYTIC ACTIVITY</scope>
    <scope>COFACTOR</scope>
    <scope>BIOPHYSICOCHEMICAL PROPERTIES</scope>
    <scope>SUBUNIT</scope>
    <source>
        <strain>Evry</strain>
    </source>
</reference>
<keyword id="KW-0032">Aminotransferase</keyword>
<keyword id="KW-0663">Pyridoxal phosphate</keyword>
<keyword id="KW-0808">Transferase</keyword>
<feature type="chain" id="PRO_0000424019" description="3-aminobutyryl-CoA aminotransferase">
    <location>
        <begin position="1"/>
        <end position="414"/>
    </location>
</feature>
<feature type="modified residue" description="N6-(pyridoxal phosphate)lysine" evidence="1">
    <location>
        <position position="261"/>
    </location>
</feature>
<accession>B0VH76</accession>
<sequence length="414" mass="46481">MAEKLKLARSMSLFEEAKQLVPGGVAGIRRPYNFVPGEYPIFFDHGKGGRVVDVDGNEYIDFLCAYGPIIIGYREDEIDDAVINQIKNKGFCFSLTQEMQNTLVKKLRELIPCCEMAALVKTGSDATTIAIRVARGYTGKTKIARYGYHGWHDWCVEVKGGIPPKLYEDIYEFHYNDLDSLKAILEANKDDMAGIIITPIGHPNGAEVQMPKPGYLEAVRELANQYHCLLIFDEIRSGFRCSLGGAQKLFGVTPDLSTFGKAMANGYAIAALVGKEEYMQVLADKVFLSSTFFPNSDGIVAAIKTIEILERDRILDVVAAKGRKFGAEVEKVVEESGVPVNFTGAPWMPYITFKKDEAGLYKKLRTEYYTQLIRHNVFMQPYHHGYICYRHTDEDLAYTVEAIRESLAEVKKML</sequence>
<dbReference type="EC" id="2.6.1.111" evidence="2"/>
<dbReference type="EMBL" id="CU466930">
    <property type="protein sequence ID" value="CAO80691.1"/>
    <property type="molecule type" value="Genomic_DNA"/>
</dbReference>
<dbReference type="RefSeq" id="WP_015424550.1">
    <property type="nucleotide sequence ID" value="NC_020449.1"/>
</dbReference>
<dbReference type="SMR" id="B0VH76"/>
<dbReference type="STRING" id="459349.CLOAM0809"/>
<dbReference type="KEGG" id="caci:CLOAM0809"/>
<dbReference type="eggNOG" id="COG0001">
    <property type="taxonomic scope" value="Bacteria"/>
</dbReference>
<dbReference type="HOGENOM" id="CLU_016922_1_4_0"/>
<dbReference type="OrthoDB" id="9801052at2"/>
<dbReference type="BRENDA" id="2.6.1.111">
    <property type="organism ID" value="14207"/>
</dbReference>
<dbReference type="UniPathway" id="UPA00870"/>
<dbReference type="Proteomes" id="UP000002019">
    <property type="component" value="Chromosome"/>
</dbReference>
<dbReference type="GO" id="GO:0042803">
    <property type="term" value="F:protein homodimerization activity"/>
    <property type="evidence" value="ECO:0000314"/>
    <property type="project" value="UniProtKB"/>
</dbReference>
<dbReference type="GO" id="GO:0030170">
    <property type="term" value="F:pyridoxal phosphate binding"/>
    <property type="evidence" value="ECO:0000314"/>
    <property type="project" value="UniProtKB"/>
</dbReference>
<dbReference type="GO" id="GO:0008483">
    <property type="term" value="F:transaminase activity"/>
    <property type="evidence" value="ECO:0000314"/>
    <property type="project" value="UniProtKB"/>
</dbReference>
<dbReference type="GO" id="GO:0019475">
    <property type="term" value="P:L-lysine catabolic process to acetate"/>
    <property type="evidence" value="ECO:0000314"/>
    <property type="project" value="UniProtKB"/>
</dbReference>
<dbReference type="Gene3D" id="3.90.1150.10">
    <property type="entry name" value="Aspartate Aminotransferase, domain 1"/>
    <property type="match status" value="1"/>
</dbReference>
<dbReference type="Gene3D" id="3.40.640.10">
    <property type="entry name" value="Type I PLP-dependent aspartate aminotransferase-like (Major domain)"/>
    <property type="match status" value="1"/>
</dbReference>
<dbReference type="InterPro" id="IPR005814">
    <property type="entry name" value="Aminotrans_3"/>
</dbReference>
<dbReference type="InterPro" id="IPR049704">
    <property type="entry name" value="Aminotrans_3_PPA_site"/>
</dbReference>
<dbReference type="InterPro" id="IPR015424">
    <property type="entry name" value="PyrdxlP-dep_Trfase"/>
</dbReference>
<dbReference type="InterPro" id="IPR015421">
    <property type="entry name" value="PyrdxlP-dep_Trfase_major"/>
</dbReference>
<dbReference type="InterPro" id="IPR015422">
    <property type="entry name" value="PyrdxlP-dep_Trfase_small"/>
</dbReference>
<dbReference type="PANTHER" id="PTHR43713">
    <property type="entry name" value="GLUTAMATE-1-SEMIALDEHYDE 2,1-AMINOMUTASE"/>
    <property type="match status" value="1"/>
</dbReference>
<dbReference type="PANTHER" id="PTHR43713:SF3">
    <property type="entry name" value="GLUTAMATE-1-SEMIALDEHYDE 2,1-AMINOMUTASE 1, CHLOROPLASTIC-RELATED"/>
    <property type="match status" value="1"/>
</dbReference>
<dbReference type="Pfam" id="PF00202">
    <property type="entry name" value="Aminotran_3"/>
    <property type="match status" value="1"/>
</dbReference>
<dbReference type="SUPFAM" id="SSF53383">
    <property type="entry name" value="PLP-dependent transferases"/>
    <property type="match status" value="1"/>
</dbReference>
<dbReference type="PROSITE" id="PS00600">
    <property type="entry name" value="AA_TRANSFER_CLASS_3"/>
    <property type="match status" value="1"/>
</dbReference>
<evidence type="ECO:0000250" key="1"/>
<evidence type="ECO:0000269" key="2">
    <source>
    </source>
</evidence>
<evidence type="ECO:0000305" key="3"/>
<gene>
    <name type="primary">kat</name>
    <name type="ordered locus">CLOAM0809</name>
</gene>